<keyword id="KW-0010">Activator</keyword>
<keyword id="KW-0963">Cytoplasm</keyword>
<keyword id="KW-0238">DNA-binding</keyword>
<keyword id="KW-0597">Phosphoprotein</keyword>
<keyword id="KW-0804">Transcription</keyword>
<keyword id="KW-0805">Transcription regulation</keyword>
<keyword id="KW-0902">Two-component regulatory system</keyword>
<proteinExistence type="inferred from homology"/>
<feature type="chain" id="PRO_0000081269" description="Response regulator protein VraR">
    <location>
        <begin position="1"/>
        <end position="209"/>
    </location>
</feature>
<feature type="domain" description="Response regulatory" evidence="3">
    <location>
        <begin position="4"/>
        <end position="120"/>
    </location>
</feature>
<feature type="domain" description="HTH luxR-type" evidence="4">
    <location>
        <begin position="141"/>
        <end position="206"/>
    </location>
</feature>
<feature type="DNA-binding region" description="H-T-H motif" evidence="4">
    <location>
        <begin position="165"/>
        <end position="184"/>
    </location>
</feature>
<feature type="modified residue" description="4-aspartylphosphate" evidence="3">
    <location>
        <position position="55"/>
    </location>
</feature>
<comment type="function">
    <text evidence="1 2">Member of the two-component regulatory system VraS/VraR involved in the control of the cell wall peptidoglycan biosynthesis. Upon cellular stress, the histidine kinase VraS transfers the phosphoryl group onto VraR. Upon phosphorylation, VraR dimerizes at the N-terminal domain. In turn, phosphorylation-induced dimerization expands and enhances the VraR binding to its own promoter leading to increased expression and subsequent modulation of as many as 40 genes, which ultimately constitute the S.aureus response to cell wall damage (By similarity). In addition, inhibits the host autophagic flux and delays the early stage of autophagosome formation, thereby promoting bacterial survival. Facilitates the ability of S.aureus to resist host polymorphonuclear leukocytes-mediated phagocytosis and killing thus contributing to immune evasion (By similarity).</text>
</comment>
<comment type="subunit">
    <text evidence="2">Homodimer.</text>
</comment>
<comment type="subcellular location">
    <subcellularLocation>
        <location evidence="5">Cytoplasm</location>
    </subcellularLocation>
</comment>
<comment type="PTM">
    <text evidence="2">Phosphorylated by VraS. Phosphorylation state of VraR controls dimerization of the protein.</text>
</comment>
<accession>Q5HEP0</accession>
<reference key="1">
    <citation type="journal article" date="2005" name="J. Bacteriol.">
        <title>Insights on evolution of virulence and resistance from the complete genome analysis of an early methicillin-resistant Staphylococcus aureus strain and a biofilm-producing methicillin-resistant Staphylococcus epidermidis strain.</title>
        <authorList>
            <person name="Gill S.R."/>
            <person name="Fouts D.E."/>
            <person name="Archer G.L."/>
            <person name="Mongodin E.F."/>
            <person name="DeBoy R.T."/>
            <person name="Ravel J."/>
            <person name="Paulsen I.T."/>
            <person name="Kolonay J.F."/>
            <person name="Brinkac L.M."/>
            <person name="Beanan M.J."/>
            <person name="Dodson R.J."/>
            <person name="Daugherty S.C."/>
            <person name="Madupu R."/>
            <person name="Angiuoli S.V."/>
            <person name="Durkin A.S."/>
            <person name="Haft D.H."/>
            <person name="Vamathevan J.J."/>
            <person name="Khouri H."/>
            <person name="Utterback T.R."/>
            <person name="Lee C."/>
            <person name="Dimitrov G."/>
            <person name="Jiang L."/>
            <person name="Qin H."/>
            <person name="Weidman J."/>
            <person name="Tran K."/>
            <person name="Kang K.H."/>
            <person name="Hance I.R."/>
            <person name="Nelson K.E."/>
            <person name="Fraser C.M."/>
        </authorList>
    </citation>
    <scope>NUCLEOTIDE SEQUENCE [LARGE SCALE GENOMIC DNA]</scope>
    <source>
        <strain>COL</strain>
    </source>
</reference>
<sequence length="209" mass="23545">MTIKVLFVDDHEMVRIGISSYLSTQSDIEVVGEGASGKEAIAKAHELKPDLILMDLLMDDMDGVEATTQIKKDLPQIKVLMLTSFIEDKEVYRALDAGVDSYILKTTSAKDIADAVRKTSRGESVFEPEVLVKMRNRMKKRAELYEMLTEREMEILLLIAKGYSNQEIASASHITIKTVKTHVSNILSKLEVQDRTQAVIYAFQHNLIQ</sequence>
<name>VRAR_STAAC</name>
<gene>
    <name type="primary">vraR</name>
    <name type="ordered locus">SACOL1942</name>
</gene>
<protein>
    <recommendedName>
        <fullName>Response regulator protein VraR</fullName>
    </recommendedName>
</protein>
<dbReference type="EMBL" id="CP000046">
    <property type="protein sequence ID" value="AAW38383.1"/>
    <property type="molecule type" value="Genomic_DNA"/>
</dbReference>
<dbReference type="RefSeq" id="WP_000153530.1">
    <property type="nucleotide sequence ID" value="NZ_JBGOFO010000006.1"/>
</dbReference>
<dbReference type="SMR" id="Q5HEP0"/>
<dbReference type="KEGG" id="sac:SACOL1942"/>
<dbReference type="HOGENOM" id="CLU_000445_90_10_9"/>
<dbReference type="Proteomes" id="UP000000530">
    <property type="component" value="Chromosome"/>
</dbReference>
<dbReference type="GO" id="GO:0005737">
    <property type="term" value="C:cytoplasm"/>
    <property type="evidence" value="ECO:0007669"/>
    <property type="project" value="UniProtKB-SubCell"/>
</dbReference>
<dbReference type="GO" id="GO:0003677">
    <property type="term" value="F:DNA binding"/>
    <property type="evidence" value="ECO:0007669"/>
    <property type="project" value="UniProtKB-KW"/>
</dbReference>
<dbReference type="GO" id="GO:0000160">
    <property type="term" value="P:phosphorelay signal transduction system"/>
    <property type="evidence" value="ECO:0007669"/>
    <property type="project" value="UniProtKB-KW"/>
</dbReference>
<dbReference type="GO" id="GO:0006355">
    <property type="term" value="P:regulation of DNA-templated transcription"/>
    <property type="evidence" value="ECO:0007669"/>
    <property type="project" value="InterPro"/>
</dbReference>
<dbReference type="CDD" id="cd06170">
    <property type="entry name" value="LuxR_C_like"/>
    <property type="match status" value="1"/>
</dbReference>
<dbReference type="CDD" id="cd17535">
    <property type="entry name" value="REC_NarL-like"/>
    <property type="match status" value="1"/>
</dbReference>
<dbReference type="Gene3D" id="3.40.50.2300">
    <property type="match status" value="1"/>
</dbReference>
<dbReference type="InterPro" id="IPR011006">
    <property type="entry name" value="CheY-like_superfamily"/>
</dbReference>
<dbReference type="InterPro" id="IPR016032">
    <property type="entry name" value="Sig_transdc_resp-reg_C-effctor"/>
</dbReference>
<dbReference type="InterPro" id="IPR001789">
    <property type="entry name" value="Sig_transdc_resp-reg_receiver"/>
</dbReference>
<dbReference type="InterPro" id="IPR000792">
    <property type="entry name" value="Tscrpt_reg_LuxR_C"/>
</dbReference>
<dbReference type="InterPro" id="IPR039420">
    <property type="entry name" value="WalR-like"/>
</dbReference>
<dbReference type="PANTHER" id="PTHR43214:SF37">
    <property type="entry name" value="TRANSCRIPTIONAL REGULATORY PROTEIN YDFI"/>
    <property type="match status" value="1"/>
</dbReference>
<dbReference type="PANTHER" id="PTHR43214">
    <property type="entry name" value="TWO-COMPONENT RESPONSE REGULATOR"/>
    <property type="match status" value="1"/>
</dbReference>
<dbReference type="Pfam" id="PF00196">
    <property type="entry name" value="GerE"/>
    <property type="match status" value="1"/>
</dbReference>
<dbReference type="Pfam" id="PF00072">
    <property type="entry name" value="Response_reg"/>
    <property type="match status" value="1"/>
</dbReference>
<dbReference type="PRINTS" id="PR00038">
    <property type="entry name" value="HTHLUXR"/>
</dbReference>
<dbReference type="SMART" id="SM00421">
    <property type="entry name" value="HTH_LUXR"/>
    <property type="match status" value="1"/>
</dbReference>
<dbReference type="SMART" id="SM00448">
    <property type="entry name" value="REC"/>
    <property type="match status" value="1"/>
</dbReference>
<dbReference type="SUPFAM" id="SSF46894">
    <property type="entry name" value="C-terminal effector domain of the bipartite response regulators"/>
    <property type="match status" value="1"/>
</dbReference>
<dbReference type="SUPFAM" id="SSF52172">
    <property type="entry name" value="CheY-like"/>
    <property type="match status" value="1"/>
</dbReference>
<dbReference type="PROSITE" id="PS50043">
    <property type="entry name" value="HTH_LUXR_2"/>
    <property type="match status" value="1"/>
</dbReference>
<dbReference type="PROSITE" id="PS50110">
    <property type="entry name" value="RESPONSE_REGULATORY"/>
    <property type="match status" value="1"/>
</dbReference>
<evidence type="ECO:0000250" key="1">
    <source>
        <dbReference type="UniProtKB" id="P0C0Z1"/>
    </source>
</evidence>
<evidence type="ECO:0000250" key="2">
    <source>
        <dbReference type="UniProtKB" id="Q7A2Q1"/>
    </source>
</evidence>
<evidence type="ECO:0000255" key="3">
    <source>
        <dbReference type="PROSITE-ProRule" id="PRU00169"/>
    </source>
</evidence>
<evidence type="ECO:0000255" key="4">
    <source>
        <dbReference type="PROSITE-ProRule" id="PRU00411"/>
    </source>
</evidence>
<evidence type="ECO:0000305" key="5"/>
<organism>
    <name type="scientific">Staphylococcus aureus (strain COL)</name>
    <dbReference type="NCBI Taxonomy" id="93062"/>
    <lineage>
        <taxon>Bacteria</taxon>
        <taxon>Bacillati</taxon>
        <taxon>Bacillota</taxon>
        <taxon>Bacilli</taxon>
        <taxon>Bacillales</taxon>
        <taxon>Staphylococcaceae</taxon>
        <taxon>Staphylococcus</taxon>
    </lineage>
</organism>